<organism>
    <name type="scientific">Sulfurimonas denitrificans (strain ATCC 33889 / DSM 1251)</name>
    <name type="common">Thiomicrospira denitrificans (strain ATCC 33889 / DSM 1251)</name>
    <dbReference type="NCBI Taxonomy" id="326298"/>
    <lineage>
        <taxon>Bacteria</taxon>
        <taxon>Pseudomonadati</taxon>
        <taxon>Campylobacterota</taxon>
        <taxon>Epsilonproteobacteria</taxon>
        <taxon>Campylobacterales</taxon>
        <taxon>Sulfurimonadaceae</taxon>
        <taxon>Sulfurimonas</taxon>
    </lineage>
</organism>
<proteinExistence type="inferred from homology"/>
<gene>
    <name evidence="1" type="primary">hisS</name>
    <name type="ordered locus">Suden_1130</name>
</gene>
<reference key="1">
    <citation type="journal article" date="2008" name="Appl. Environ. Microbiol.">
        <title>Genome of the epsilonproteobacterial chemolithoautotroph Sulfurimonas denitrificans.</title>
        <authorList>
            <person name="Sievert S.M."/>
            <person name="Scott K.M."/>
            <person name="Klotz M.G."/>
            <person name="Chain P.S.G."/>
            <person name="Hauser L.J."/>
            <person name="Hemp J."/>
            <person name="Huegler M."/>
            <person name="Land M."/>
            <person name="Lapidus A."/>
            <person name="Larimer F.W."/>
            <person name="Lucas S."/>
            <person name="Malfatti S.A."/>
            <person name="Meyer F."/>
            <person name="Paulsen I.T."/>
            <person name="Ren Q."/>
            <person name="Simon J."/>
            <person name="Bailey K."/>
            <person name="Diaz E."/>
            <person name="Fitzpatrick K.A."/>
            <person name="Glover B."/>
            <person name="Gwatney N."/>
            <person name="Korajkic A."/>
            <person name="Long A."/>
            <person name="Mobberley J.M."/>
            <person name="Pantry S.N."/>
            <person name="Pazder G."/>
            <person name="Peterson S."/>
            <person name="Quintanilla J.D."/>
            <person name="Sprinkle R."/>
            <person name="Stephens J."/>
            <person name="Thomas P."/>
            <person name="Vaughn R."/>
            <person name="Weber M.J."/>
            <person name="Wooten L.L."/>
        </authorList>
    </citation>
    <scope>NUCLEOTIDE SEQUENCE [LARGE SCALE GENOMIC DNA]</scope>
    <source>
        <strain>ATCC 33889 / DSM 1251</strain>
    </source>
</reference>
<keyword id="KW-0030">Aminoacyl-tRNA synthetase</keyword>
<keyword id="KW-0067">ATP-binding</keyword>
<keyword id="KW-0963">Cytoplasm</keyword>
<keyword id="KW-0436">Ligase</keyword>
<keyword id="KW-0547">Nucleotide-binding</keyword>
<keyword id="KW-0648">Protein biosynthesis</keyword>
<keyword id="KW-1185">Reference proteome</keyword>
<accession>Q30RH3</accession>
<name>SYH_SULDN</name>
<feature type="chain" id="PRO_1000016481" description="Histidine--tRNA ligase">
    <location>
        <begin position="1"/>
        <end position="403"/>
    </location>
</feature>
<dbReference type="EC" id="6.1.1.21" evidence="1"/>
<dbReference type="EMBL" id="CP000153">
    <property type="protein sequence ID" value="ABB44408.1"/>
    <property type="molecule type" value="Genomic_DNA"/>
</dbReference>
<dbReference type="RefSeq" id="WP_011372760.1">
    <property type="nucleotide sequence ID" value="NC_007575.1"/>
</dbReference>
<dbReference type="SMR" id="Q30RH3"/>
<dbReference type="STRING" id="326298.Suden_1130"/>
<dbReference type="KEGG" id="tdn:Suden_1130"/>
<dbReference type="eggNOG" id="COG0124">
    <property type="taxonomic scope" value="Bacteria"/>
</dbReference>
<dbReference type="HOGENOM" id="CLU_025113_1_1_7"/>
<dbReference type="OrthoDB" id="9800814at2"/>
<dbReference type="Proteomes" id="UP000002714">
    <property type="component" value="Chromosome"/>
</dbReference>
<dbReference type="GO" id="GO:0005737">
    <property type="term" value="C:cytoplasm"/>
    <property type="evidence" value="ECO:0007669"/>
    <property type="project" value="UniProtKB-SubCell"/>
</dbReference>
<dbReference type="GO" id="GO:0005524">
    <property type="term" value="F:ATP binding"/>
    <property type="evidence" value="ECO:0007669"/>
    <property type="project" value="UniProtKB-UniRule"/>
</dbReference>
<dbReference type="GO" id="GO:0004821">
    <property type="term" value="F:histidine-tRNA ligase activity"/>
    <property type="evidence" value="ECO:0007669"/>
    <property type="project" value="UniProtKB-UniRule"/>
</dbReference>
<dbReference type="GO" id="GO:0006427">
    <property type="term" value="P:histidyl-tRNA aminoacylation"/>
    <property type="evidence" value="ECO:0007669"/>
    <property type="project" value="UniProtKB-UniRule"/>
</dbReference>
<dbReference type="CDD" id="cd00773">
    <property type="entry name" value="HisRS-like_core"/>
    <property type="match status" value="1"/>
</dbReference>
<dbReference type="Gene3D" id="3.40.50.800">
    <property type="entry name" value="Anticodon-binding domain"/>
    <property type="match status" value="1"/>
</dbReference>
<dbReference type="Gene3D" id="3.30.930.10">
    <property type="entry name" value="Bira Bifunctional Protein, Domain 2"/>
    <property type="match status" value="1"/>
</dbReference>
<dbReference type="HAMAP" id="MF_00127">
    <property type="entry name" value="His_tRNA_synth"/>
    <property type="match status" value="1"/>
</dbReference>
<dbReference type="InterPro" id="IPR006195">
    <property type="entry name" value="aa-tRNA-synth_II"/>
</dbReference>
<dbReference type="InterPro" id="IPR045864">
    <property type="entry name" value="aa-tRNA-synth_II/BPL/LPL"/>
</dbReference>
<dbReference type="InterPro" id="IPR004154">
    <property type="entry name" value="Anticodon-bd"/>
</dbReference>
<dbReference type="InterPro" id="IPR036621">
    <property type="entry name" value="Anticodon-bd_dom_sf"/>
</dbReference>
<dbReference type="InterPro" id="IPR015807">
    <property type="entry name" value="His-tRNA-ligase"/>
</dbReference>
<dbReference type="InterPro" id="IPR041715">
    <property type="entry name" value="HisRS-like_core"/>
</dbReference>
<dbReference type="InterPro" id="IPR004516">
    <property type="entry name" value="HisRS/HisZ"/>
</dbReference>
<dbReference type="NCBIfam" id="TIGR00442">
    <property type="entry name" value="hisS"/>
    <property type="match status" value="1"/>
</dbReference>
<dbReference type="PANTHER" id="PTHR43707:SF1">
    <property type="entry name" value="HISTIDINE--TRNA LIGASE, MITOCHONDRIAL-RELATED"/>
    <property type="match status" value="1"/>
</dbReference>
<dbReference type="PANTHER" id="PTHR43707">
    <property type="entry name" value="HISTIDYL-TRNA SYNTHETASE"/>
    <property type="match status" value="1"/>
</dbReference>
<dbReference type="Pfam" id="PF03129">
    <property type="entry name" value="HGTP_anticodon"/>
    <property type="match status" value="1"/>
</dbReference>
<dbReference type="Pfam" id="PF13393">
    <property type="entry name" value="tRNA-synt_His"/>
    <property type="match status" value="1"/>
</dbReference>
<dbReference type="PIRSF" id="PIRSF001549">
    <property type="entry name" value="His-tRNA_synth"/>
    <property type="match status" value="1"/>
</dbReference>
<dbReference type="SUPFAM" id="SSF52954">
    <property type="entry name" value="Class II aaRS ABD-related"/>
    <property type="match status" value="1"/>
</dbReference>
<dbReference type="SUPFAM" id="SSF55681">
    <property type="entry name" value="Class II aaRS and biotin synthetases"/>
    <property type="match status" value="1"/>
</dbReference>
<dbReference type="PROSITE" id="PS50862">
    <property type="entry name" value="AA_TRNA_LIGASE_II"/>
    <property type="match status" value="1"/>
</dbReference>
<comment type="catalytic activity">
    <reaction evidence="1">
        <text>tRNA(His) + L-histidine + ATP = L-histidyl-tRNA(His) + AMP + diphosphate + H(+)</text>
        <dbReference type="Rhea" id="RHEA:17313"/>
        <dbReference type="Rhea" id="RHEA-COMP:9665"/>
        <dbReference type="Rhea" id="RHEA-COMP:9689"/>
        <dbReference type="ChEBI" id="CHEBI:15378"/>
        <dbReference type="ChEBI" id="CHEBI:30616"/>
        <dbReference type="ChEBI" id="CHEBI:33019"/>
        <dbReference type="ChEBI" id="CHEBI:57595"/>
        <dbReference type="ChEBI" id="CHEBI:78442"/>
        <dbReference type="ChEBI" id="CHEBI:78527"/>
        <dbReference type="ChEBI" id="CHEBI:456215"/>
        <dbReference type="EC" id="6.1.1.21"/>
    </reaction>
</comment>
<comment type="subunit">
    <text evidence="1">Homodimer.</text>
</comment>
<comment type="subcellular location">
    <subcellularLocation>
        <location evidence="1">Cytoplasm</location>
    </subcellularLocation>
</comment>
<comment type="similarity">
    <text evidence="1">Belongs to the class-II aminoacyl-tRNA synthetase family.</text>
</comment>
<protein>
    <recommendedName>
        <fullName evidence="1">Histidine--tRNA ligase</fullName>
        <ecNumber evidence="1">6.1.1.21</ecNumber>
    </recommendedName>
    <alternativeName>
        <fullName evidence="1">Histidyl-tRNA synthetase</fullName>
        <shortName evidence="1">HisRS</shortName>
    </alternativeName>
</protein>
<sequence>MISSLRGMNDILSEDYERFTHFITVATKIAQRYGFHFIETPLLEETALFKRSVGESSDIVGKEMYQFVDKGENDVCLRPEGTAGVVRAFVQKKLDRAGGIHRFFYHGAMFRYERPQKGRLRQFHQFGVESFGESSVYEDASMIMMASDILKELGIGYRLQLNSLGCNECMPPYREKLINFVTKHKDEICEDCTRRVETNPIRVLDCKNEKCQSIYTEAPKLLNCLCSTCESDFTTLKMILKQNEIDFEIDTNLVRGLDYYSKTAFEFVSDNIGSQSAIAGGGRYDRLVEFLDGRPTPAVGFAMGIERLMELIIMPEAKKDGYYLGAMDDEALDMIVKIAQKKRKSDIVILEYKTKNLKNHLKAADKSNAKYCAVIGSNEIKDGTIWVKNLEDKTEKTILSELF</sequence>
<evidence type="ECO:0000255" key="1">
    <source>
        <dbReference type="HAMAP-Rule" id="MF_00127"/>
    </source>
</evidence>